<gene>
    <name evidence="1" type="primary">lnt</name>
    <name type="ordered locus">CBU_0564</name>
</gene>
<proteinExistence type="inferred from homology"/>
<reference key="1">
    <citation type="journal article" date="2003" name="Proc. Natl. Acad. Sci. U.S.A.">
        <title>Complete genome sequence of the Q-fever pathogen, Coxiella burnetii.</title>
        <authorList>
            <person name="Seshadri R."/>
            <person name="Paulsen I.T."/>
            <person name="Eisen J.A."/>
            <person name="Read T.D."/>
            <person name="Nelson K.E."/>
            <person name="Nelson W.C."/>
            <person name="Ward N.L."/>
            <person name="Tettelin H."/>
            <person name="Davidsen T.M."/>
            <person name="Beanan M.J."/>
            <person name="DeBoy R.T."/>
            <person name="Daugherty S.C."/>
            <person name="Brinkac L.M."/>
            <person name="Madupu R."/>
            <person name="Dodson R.J."/>
            <person name="Khouri H.M."/>
            <person name="Lee K.H."/>
            <person name="Carty H.A."/>
            <person name="Scanlan D."/>
            <person name="Heinzen R.A."/>
            <person name="Thompson H.A."/>
            <person name="Samuel J.E."/>
            <person name="Fraser C.M."/>
            <person name="Heidelberg J.F."/>
        </authorList>
    </citation>
    <scope>NUCLEOTIDE SEQUENCE [LARGE SCALE GENOMIC DNA]</scope>
    <source>
        <strain>RSA 493 / Nine Mile phase I</strain>
    </source>
</reference>
<evidence type="ECO:0000255" key="1">
    <source>
        <dbReference type="HAMAP-Rule" id="MF_01148"/>
    </source>
</evidence>
<dbReference type="EC" id="2.3.1.269" evidence="1"/>
<dbReference type="EMBL" id="AE016828">
    <property type="protein sequence ID" value="AAO90108.1"/>
    <property type="molecule type" value="Genomic_DNA"/>
</dbReference>
<dbReference type="RefSeq" id="WP_010957665.1">
    <property type="nucleotide sequence ID" value="NC_002971.4"/>
</dbReference>
<dbReference type="SMR" id="Q820B4"/>
<dbReference type="STRING" id="227377.CBU_0564"/>
<dbReference type="EnsemblBacteria" id="AAO90108">
    <property type="protein sequence ID" value="AAO90108"/>
    <property type="gene ID" value="CBU_0564"/>
</dbReference>
<dbReference type="KEGG" id="cbu:CBU_0564"/>
<dbReference type="PATRIC" id="fig|227377.7.peg.558"/>
<dbReference type="eggNOG" id="COG0815">
    <property type="taxonomic scope" value="Bacteria"/>
</dbReference>
<dbReference type="HOGENOM" id="CLU_019563_3_0_6"/>
<dbReference type="OrthoDB" id="9804277at2"/>
<dbReference type="UniPathway" id="UPA00666"/>
<dbReference type="Proteomes" id="UP000002671">
    <property type="component" value="Chromosome"/>
</dbReference>
<dbReference type="GO" id="GO:0005886">
    <property type="term" value="C:plasma membrane"/>
    <property type="evidence" value="ECO:0007669"/>
    <property type="project" value="UniProtKB-SubCell"/>
</dbReference>
<dbReference type="GO" id="GO:0016410">
    <property type="term" value="F:N-acyltransferase activity"/>
    <property type="evidence" value="ECO:0007669"/>
    <property type="project" value="UniProtKB-UniRule"/>
</dbReference>
<dbReference type="GO" id="GO:0042158">
    <property type="term" value="P:lipoprotein biosynthetic process"/>
    <property type="evidence" value="ECO:0007669"/>
    <property type="project" value="UniProtKB-UniRule"/>
</dbReference>
<dbReference type="CDD" id="cd07571">
    <property type="entry name" value="ALP_N-acyl_transferase"/>
    <property type="match status" value="1"/>
</dbReference>
<dbReference type="Gene3D" id="3.60.110.10">
    <property type="entry name" value="Carbon-nitrogen hydrolase"/>
    <property type="match status" value="1"/>
</dbReference>
<dbReference type="HAMAP" id="MF_01148">
    <property type="entry name" value="Lnt"/>
    <property type="match status" value="1"/>
</dbReference>
<dbReference type="InterPro" id="IPR004563">
    <property type="entry name" value="Apolipo_AcylTrfase"/>
</dbReference>
<dbReference type="InterPro" id="IPR003010">
    <property type="entry name" value="C-N_Hydrolase"/>
</dbReference>
<dbReference type="InterPro" id="IPR036526">
    <property type="entry name" value="C-N_Hydrolase_sf"/>
</dbReference>
<dbReference type="InterPro" id="IPR045378">
    <property type="entry name" value="LNT_N"/>
</dbReference>
<dbReference type="NCBIfam" id="TIGR00546">
    <property type="entry name" value="lnt"/>
    <property type="match status" value="1"/>
</dbReference>
<dbReference type="PANTHER" id="PTHR38686">
    <property type="entry name" value="APOLIPOPROTEIN N-ACYLTRANSFERASE"/>
    <property type="match status" value="1"/>
</dbReference>
<dbReference type="PANTHER" id="PTHR38686:SF1">
    <property type="entry name" value="APOLIPOPROTEIN N-ACYLTRANSFERASE"/>
    <property type="match status" value="1"/>
</dbReference>
<dbReference type="Pfam" id="PF00795">
    <property type="entry name" value="CN_hydrolase"/>
    <property type="match status" value="1"/>
</dbReference>
<dbReference type="Pfam" id="PF20154">
    <property type="entry name" value="LNT_N"/>
    <property type="match status" value="1"/>
</dbReference>
<dbReference type="SUPFAM" id="SSF56317">
    <property type="entry name" value="Carbon-nitrogen hydrolase"/>
    <property type="match status" value="1"/>
</dbReference>
<dbReference type="PROSITE" id="PS50263">
    <property type="entry name" value="CN_HYDROLASE"/>
    <property type="match status" value="1"/>
</dbReference>
<comment type="function">
    <text evidence="1">Catalyzes the phospholipid dependent N-acylation of the N-terminal cysteine of apolipoprotein, the last step in lipoprotein maturation.</text>
</comment>
<comment type="catalytic activity">
    <reaction evidence="1">
        <text>N-terminal S-1,2-diacyl-sn-glyceryl-L-cysteinyl-[lipoprotein] + a glycerophospholipid = N-acyl-S-1,2-diacyl-sn-glyceryl-L-cysteinyl-[lipoprotein] + a 2-acyl-sn-glycero-3-phospholipid + H(+)</text>
        <dbReference type="Rhea" id="RHEA:48228"/>
        <dbReference type="Rhea" id="RHEA-COMP:14681"/>
        <dbReference type="Rhea" id="RHEA-COMP:14684"/>
        <dbReference type="ChEBI" id="CHEBI:15378"/>
        <dbReference type="ChEBI" id="CHEBI:136912"/>
        <dbReference type="ChEBI" id="CHEBI:140656"/>
        <dbReference type="ChEBI" id="CHEBI:140657"/>
        <dbReference type="ChEBI" id="CHEBI:140660"/>
        <dbReference type="EC" id="2.3.1.269"/>
    </reaction>
</comment>
<comment type="pathway">
    <text evidence="1">Protein modification; lipoprotein biosynthesis (N-acyl transfer).</text>
</comment>
<comment type="subcellular location">
    <subcellularLocation>
        <location evidence="1">Cell inner membrane</location>
        <topology evidence="1">Multi-pass membrane protein</topology>
    </subcellularLocation>
</comment>
<comment type="similarity">
    <text evidence="1">Belongs to the CN hydrolase family. Apolipoprotein N-acyltransferase subfamily.</text>
</comment>
<sequence length="485" mass="54620">MNSVLALIAGAILPLAFAPFNWFPIAFVSPAILLAVWLRSRPLVAWWRGWLFGFGFFGAGASWVYVSIHHFGNANVPLAVLITVLFVFVLALFIAFQGLSFSLFFRKRKAALTALFAFPAWWVVWEWLRSILFTGFPWLFLGYSQINSPLKGFGPLFGIYGISLIVAFISGCIYLLVTSKKLNKKIMCLILIILPFIVGWVLTFIPWTRPGSESVRVGLVQGNIGQRLKWDPDTLYSTLHTYYSETQKNWDHGIIVWPEAAIPIYPQQVSVFLQALDKEAKQHNTALMTGIPIYHEKTNKVFNGLMVLGDGHGLYLKRHLVPFGESFTSSKICNLLMKYFDIPMSDLSPGPEDQEPTVVKGIPFAPFICYEIAYPTEVLNHLSNKQFIVVVNDDSWFAGTIAPAQQLQIAQMRALETERYLLYSTNTGITAIISPEGKIVKSAPQNQRLLLTGQIKPVTGKTPLMRWNYYPVVGIIIIFLLLTFL</sequence>
<protein>
    <recommendedName>
        <fullName evidence="1">Apolipoprotein N-acyltransferase</fullName>
        <shortName evidence="1">ALP N-acyltransferase</shortName>
        <ecNumber evidence="1">2.3.1.269</ecNumber>
    </recommendedName>
</protein>
<name>LNT_COXBU</name>
<keyword id="KW-0012">Acyltransferase</keyword>
<keyword id="KW-0997">Cell inner membrane</keyword>
<keyword id="KW-1003">Cell membrane</keyword>
<keyword id="KW-0472">Membrane</keyword>
<keyword id="KW-1185">Reference proteome</keyword>
<keyword id="KW-0808">Transferase</keyword>
<keyword id="KW-0812">Transmembrane</keyword>
<keyword id="KW-1133">Transmembrane helix</keyword>
<feature type="chain" id="PRO_0000178061" description="Apolipoprotein N-acyltransferase">
    <location>
        <begin position="1"/>
        <end position="485"/>
    </location>
</feature>
<feature type="transmembrane region" description="Helical" evidence="1">
    <location>
        <begin position="8"/>
        <end position="28"/>
    </location>
</feature>
<feature type="transmembrane region" description="Helical" evidence="1">
    <location>
        <begin position="49"/>
        <end position="69"/>
    </location>
</feature>
<feature type="transmembrane region" description="Helical" evidence="1">
    <location>
        <begin position="76"/>
        <end position="96"/>
    </location>
</feature>
<feature type="transmembrane region" description="Helical" evidence="1">
    <location>
        <begin position="121"/>
        <end position="141"/>
    </location>
</feature>
<feature type="transmembrane region" description="Helical" evidence="1">
    <location>
        <begin position="157"/>
        <end position="177"/>
    </location>
</feature>
<feature type="transmembrane region" description="Helical" evidence="1">
    <location>
        <begin position="186"/>
        <end position="206"/>
    </location>
</feature>
<feature type="transmembrane region" description="Helical" evidence="1">
    <location>
        <begin position="464"/>
        <end position="484"/>
    </location>
</feature>
<feature type="domain" description="CN hydrolase" evidence="1">
    <location>
        <begin position="220"/>
        <end position="457"/>
    </location>
</feature>
<feature type="active site" description="Proton acceptor" evidence="1">
    <location>
        <position position="259"/>
    </location>
</feature>
<feature type="active site" evidence="1">
    <location>
        <position position="317"/>
    </location>
</feature>
<feature type="active site" description="Nucleophile" evidence="1">
    <location>
        <position position="369"/>
    </location>
</feature>
<accession>Q820B4</accession>
<organism>
    <name type="scientific">Coxiella burnetii (strain RSA 493 / Nine Mile phase I)</name>
    <dbReference type="NCBI Taxonomy" id="227377"/>
    <lineage>
        <taxon>Bacteria</taxon>
        <taxon>Pseudomonadati</taxon>
        <taxon>Pseudomonadota</taxon>
        <taxon>Gammaproteobacteria</taxon>
        <taxon>Legionellales</taxon>
        <taxon>Coxiellaceae</taxon>
        <taxon>Coxiella</taxon>
    </lineage>
</organism>